<dbReference type="EMBL" id="AE005674">
    <property type="protein sequence ID" value="AAN42029.1"/>
    <property type="molecule type" value="Genomic_DNA"/>
</dbReference>
<dbReference type="EMBL" id="AE014073">
    <property type="protein sequence ID" value="AAP15906.1"/>
    <property type="molecule type" value="Genomic_DNA"/>
</dbReference>
<dbReference type="RefSeq" id="NP_706322.1">
    <property type="nucleotide sequence ID" value="NC_004337.2"/>
</dbReference>
<dbReference type="RefSeq" id="WP_000179819.1">
    <property type="nucleotide sequence ID" value="NZ_WPGW01000189.1"/>
</dbReference>
<dbReference type="SMR" id="P0ABJ5"/>
<dbReference type="STRING" id="198214.SF0371"/>
<dbReference type="PaxDb" id="198214-SF0371"/>
<dbReference type="GeneID" id="1027694"/>
<dbReference type="KEGG" id="sfl:SF0371"/>
<dbReference type="KEGG" id="sfx:S0376"/>
<dbReference type="PATRIC" id="fig|198214.7.peg.426"/>
<dbReference type="HOGENOM" id="CLU_044071_3_0_6"/>
<dbReference type="Proteomes" id="UP000001006">
    <property type="component" value="Chromosome"/>
</dbReference>
<dbReference type="Proteomes" id="UP000002673">
    <property type="component" value="Chromosome"/>
</dbReference>
<dbReference type="GO" id="GO:0005886">
    <property type="term" value="C:plasma membrane"/>
    <property type="evidence" value="ECO:0007669"/>
    <property type="project" value="UniProtKB-SubCell"/>
</dbReference>
<dbReference type="GO" id="GO:0009486">
    <property type="term" value="F:cytochrome bo3 ubiquinol oxidase activity"/>
    <property type="evidence" value="ECO:0007669"/>
    <property type="project" value="InterPro"/>
</dbReference>
<dbReference type="GO" id="GO:0004129">
    <property type="term" value="F:cytochrome-c oxidase activity"/>
    <property type="evidence" value="ECO:0007669"/>
    <property type="project" value="InterPro"/>
</dbReference>
<dbReference type="GO" id="GO:0019646">
    <property type="term" value="P:aerobic electron transport chain"/>
    <property type="evidence" value="ECO:0007669"/>
    <property type="project" value="InterPro"/>
</dbReference>
<dbReference type="CDD" id="cd02863">
    <property type="entry name" value="Ubiquinol_oxidase_III"/>
    <property type="match status" value="1"/>
</dbReference>
<dbReference type="FunFam" id="1.20.120.80:FF:000001">
    <property type="entry name" value="Cytochrome (Ubi)quinol oxidase subunit III"/>
    <property type="match status" value="1"/>
</dbReference>
<dbReference type="Gene3D" id="1.20.120.80">
    <property type="entry name" value="Cytochrome c oxidase, subunit III, four-helix bundle"/>
    <property type="match status" value="1"/>
</dbReference>
<dbReference type="InterPro" id="IPR024791">
    <property type="entry name" value="Cyt_c/ubiquinol_Oxase_su3"/>
</dbReference>
<dbReference type="InterPro" id="IPR000298">
    <property type="entry name" value="Cyt_c_oxidase-like_su3"/>
</dbReference>
<dbReference type="InterPro" id="IPR035973">
    <property type="entry name" value="Cyt_c_oxidase_su3-like_sf"/>
</dbReference>
<dbReference type="InterPro" id="IPR013833">
    <property type="entry name" value="Cyt_c_oxidase_su3_a-hlx"/>
</dbReference>
<dbReference type="InterPro" id="IPR014206">
    <property type="entry name" value="Cyt_c_ubiqinol_oxidase_su3"/>
</dbReference>
<dbReference type="InterPro" id="IPR033946">
    <property type="entry name" value="Ubiquinol_oxase_su3_dom"/>
</dbReference>
<dbReference type="NCBIfam" id="TIGR02842">
    <property type="entry name" value="CyoC"/>
    <property type="match status" value="1"/>
</dbReference>
<dbReference type="NCBIfam" id="NF007944">
    <property type="entry name" value="PRK10663.1"/>
    <property type="match status" value="1"/>
</dbReference>
<dbReference type="PANTHER" id="PTHR11403:SF2">
    <property type="entry name" value="CYTOCHROME BO(3) UBIQUINOL OXIDASE SUBUNIT 3"/>
    <property type="match status" value="1"/>
</dbReference>
<dbReference type="PANTHER" id="PTHR11403">
    <property type="entry name" value="CYTOCHROME C OXIDASE SUBUNIT III"/>
    <property type="match status" value="1"/>
</dbReference>
<dbReference type="Pfam" id="PF00510">
    <property type="entry name" value="COX3"/>
    <property type="match status" value="1"/>
</dbReference>
<dbReference type="SUPFAM" id="SSF81452">
    <property type="entry name" value="Cytochrome c oxidase subunit III-like"/>
    <property type="match status" value="1"/>
</dbReference>
<dbReference type="PROSITE" id="PS50253">
    <property type="entry name" value="COX3"/>
    <property type="match status" value="1"/>
</dbReference>
<evidence type="ECO:0000250" key="1"/>
<evidence type="ECO:0000305" key="2"/>
<keyword id="KW-0997">Cell inner membrane</keyword>
<keyword id="KW-1003">Cell membrane</keyword>
<keyword id="KW-0249">Electron transport</keyword>
<keyword id="KW-0472">Membrane</keyword>
<keyword id="KW-0560">Oxidoreductase</keyword>
<keyword id="KW-1185">Reference proteome</keyword>
<keyword id="KW-0812">Transmembrane</keyword>
<keyword id="KW-1133">Transmembrane helix</keyword>
<keyword id="KW-0813">Transport</keyword>
<feature type="chain" id="PRO_0000183895" description="Cytochrome bo(3) ubiquinol oxidase subunit 3">
    <location>
        <begin position="1"/>
        <end position="204"/>
    </location>
</feature>
<feature type="topological domain" description="Cytoplasmic" evidence="2">
    <location>
        <begin position="1"/>
        <end position="31"/>
    </location>
</feature>
<feature type="transmembrane region" description="Helical" evidence="2">
    <location>
        <begin position="32"/>
        <end position="50"/>
    </location>
</feature>
<feature type="topological domain" description="Periplasmic" evidence="2">
    <location>
        <begin position="51"/>
        <end position="66"/>
    </location>
</feature>
<feature type="transmembrane region" description="Helical" evidence="2">
    <location>
        <begin position="67"/>
        <end position="85"/>
    </location>
</feature>
<feature type="topological domain" description="Cytoplasmic" evidence="2">
    <location>
        <begin position="86"/>
        <end position="101"/>
    </location>
</feature>
<feature type="transmembrane region" description="Helical" evidence="2">
    <location>
        <begin position="102"/>
        <end position="120"/>
    </location>
</feature>
<feature type="topological domain" description="Periplasmic" evidence="2">
    <location>
        <begin position="121"/>
        <end position="142"/>
    </location>
</feature>
<feature type="transmembrane region" description="Helical" evidence="2">
    <location>
        <begin position="143"/>
        <end position="161"/>
    </location>
</feature>
<feature type="topological domain" description="Cytoplasmic" evidence="2">
    <location>
        <begin position="162"/>
        <end position="184"/>
    </location>
</feature>
<feature type="transmembrane region" description="Helical" evidence="2">
    <location>
        <begin position="185"/>
        <end position="203"/>
    </location>
</feature>
<feature type="topological domain" description="Periplasmic" evidence="2">
    <location>
        <position position="204"/>
    </location>
</feature>
<sequence>MATDTLTHATAHAHEHGHHDAGGTKIFGFWIYLMSDCILFSILFATYAVLVNGTAGGPTGKDIFELPFVLVETFLLLFSSITYGMAAIAMYKNNKSQVISWLALTWLFGAGFIGMEIYEFHHLIVNGMGPDRSGFLSAFFALVGTHGLHVTSGLIWMAVLMVQIARRGLTSTNRTRIMCLSLFWHFLDVVWICVFTVVYLMGAM</sequence>
<comment type="function">
    <text evidence="1">Cytochrome bo(3) ubiquinol terminal oxidase is the component of the aerobic respiratory chain of E.coli that predominates when cells are grown at high aeration. Has proton pump activity across the membrane in addition to electron transfer, pumping 2 protons/electron (By similarity).</text>
</comment>
<comment type="subunit">
    <text evidence="1">Heterooctamer of two A chains, two B chains, two C chains and two D chains.</text>
</comment>
<comment type="subcellular location">
    <subcellularLocation>
        <location evidence="1">Cell inner membrane</location>
        <topology evidence="1">Multi-pass membrane protein</topology>
    </subcellularLocation>
</comment>
<comment type="similarity">
    <text evidence="2">Belongs to the cytochrome c oxidase subunit 3 family.</text>
</comment>
<name>CYOC_SHIFL</name>
<gene>
    <name type="primary">cyoC</name>
    <name type="ordered locus">SF0371</name>
    <name type="ordered locus">S0376</name>
</gene>
<organism>
    <name type="scientific">Shigella flexneri</name>
    <dbReference type="NCBI Taxonomy" id="623"/>
    <lineage>
        <taxon>Bacteria</taxon>
        <taxon>Pseudomonadati</taxon>
        <taxon>Pseudomonadota</taxon>
        <taxon>Gammaproteobacteria</taxon>
        <taxon>Enterobacterales</taxon>
        <taxon>Enterobacteriaceae</taxon>
        <taxon>Shigella</taxon>
    </lineage>
</organism>
<reference key="1">
    <citation type="journal article" date="2002" name="Nucleic Acids Res.">
        <title>Genome sequence of Shigella flexneri 2a: insights into pathogenicity through comparison with genomes of Escherichia coli K12 and O157.</title>
        <authorList>
            <person name="Jin Q."/>
            <person name="Yuan Z."/>
            <person name="Xu J."/>
            <person name="Wang Y."/>
            <person name="Shen Y."/>
            <person name="Lu W."/>
            <person name="Wang J."/>
            <person name="Liu H."/>
            <person name="Yang J."/>
            <person name="Yang F."/>
            <person name="Zhang X."/>
            <person name="Zhang J."/>
            <person name="Yang G."/>
            <person name="Wu H."/>
            <person name="Qu D."/>
            <person name="Dong J."/>
            <person name="Sun L."/>
            <person name="Xue Y."/>
            <person name="Zhao A."/>
            <person name="Gao Y."/>
            <person name="Zhu J."/>
            <person name="Kan B."/>
            <person name="Ding K."/>
            <person name="Chen S."/>
            <person name="Cheng H."/>
            <person name="Yao Z."/>
            <person name="He B."/>
            <person name="Chen R."/>
            <person name="Ma D."/>
            <person name="Qiang B."/>
            <person name="Wen Y."/>
            <person name="Hou Y."/>
            <person name="Yu J."/>
        </authorList>
    </citation>
    <scope>NUCLEOTIDE SEQUENCE [LARGE SCALE GENOMIC DNA]</scope>
    <source>
        <strain>301 / Serotype 2a</strain>
    </source>
</reference>
<reference key="2">
    <citation type="journal article" date="2003" name="Infect. Immun.">
        <title>Complete genome sequence and comparative genomics of Shigella flexneri serotype 2a strain 2457T.</title>
        <authorList>
            <person name="Wei J."/>
            <person name="Goldberg M.B."/>
            <person name="Burland V."/>
            <person name="Venkatesan M.M."/>
            <person name="Deng W."/>
            <person name="Fournier G."/>
            <person name="Mayhew G.F."/>
            <person name="Plunkett G. III"/>
            <person name="Rose D.J."/>
            <person name="Darling A."/>
            <person name="Mau B."/>
            <person name="Perna N.T."/>
            <person name="Payne S.M."/>
            <person name="Runyen-Janecky L.J."/>
            <person name="Zhou S."/>
            <person name="Schwartz D.C."/>
            <person name="Blattner F.R."/>
        </authorList>
    </citation>
    <scope>NUCLEOTIDE SEQUENCE [LARGE SCALE GENOMIC DNA]</scope>
    <source>
        <strain>ATCC 700930 / 2457T / Serotype 2a</strain>
    </source>
</reference>
<proteinExistence type="inferred from homology"/>
<protein>
    <recommendedName>
        <fullName>Cytochrome bo(3) ubiquinol oxidase subunit 3</fullName>
    </recommendedName>
    <alternativeName>
        <fullName>Cytochrome o ubiquinol oxidase subunit 3</fullName>
        <shortName>Cytochrome o subunit 3</shortName>
    </alternativeName>
    <alternativeName>
        <fullName>Oxidase bo(3) subunit 3</fullName>
    </alternativeName>
    <alternativeName>
        <fullName>Ubiquinol oxidase chain C</fullName>
    </alternativeName>
    <alternativeName>
        <fullName>Ubiquinol oxidase polypeptide III</fullName>
    </alternativeName>
    <alternativeName>
        <fullName>Ubiquinol oxidase subunit 3</fullName>
    </alternativeName>
</protein>
<accession>P0ABJ5</accession>
<accession>P18402</accession>